<name>NU4C_NICTO</name>
<feature type="chain" id="PRO_0000275917" description="NAD(P)H-quinone oxidoreductase chain 4, chloroplastic">
    <location>
        <begin position="1"/>
        <end position="500"/>
    </location>
</feature>
<feature type="transmembrane region" description="Helical" evidence="1">
    <location>
        <begin position="4"/>
        <end position="24"/>
    </location>
</feature>
<feature type="transmembrane region" description="Helical" evidence="1">
    <location>
        <begin position="35"/>
        <end position="55"/>
    </location>
</feature>
<feature type="transmembrane region" description="Helical" evidence="1">
    <location>
        <begin position="87"/>
        <end position="107"/>
    </location>
</feature>
<feature type="transmembrane region" description="Helical" evidence="1">
    <location>
        <begin position="113"/>
        <end position="130"/>
    </location>
</feature>
<feature type="transmembrane region" description="Helical" evidence="1">
    <location>
        <begin position="134"/>
        <end position="154"/>
    </location>
</feature>
<feature type="transmembrane region" description="Helical" evidence="1">
    <location>
        <begin position="167"/>
        <end position="187"/>
    </location>
</feature>
<feature type="transmembrane region" description="Helical" evidence="1">
    <location>
        <begin position="208"/>
        <end position="228"/>
    </location>
</feature>
<feature type="transmembrane region" description="Helical" evidence="1">
    <location>
        <begin position="242"/>
        <end position="262"/>
    </location>
</feature>
<feature type="transmembrane region" description="Helical" evidence="1">
    <location>
        <begin position="272"/>
        <end position="292"/>
    </location>
</feature>
<feature type="transmembrane region" description="Helical" evidence="1">
    <location>
        <begin position="305"/>
        <end position="325"/>
    </location>
</feature>
<feature type="transmembrane region" description="Helical" evidence="1">
    <location>
        <begin position="330"/>
        <end position="350"/>
    </location>
</feature>
<feature type="transmembrane region" description="Helical" evidence="1">
    <location>
        <begin position="386"/>
        <end position="406"/>
    </location>
</feature>
<feature type="transmembrane region" description="Helical" evidence="1">
    <location>
        <begin position="411"/>
        <end position="431"/>
    </location>
</feature>
<feature type="transmembrane region" description="Helical" evidence="1">
    <location>
        <begin position="462"/>
        <end position="482"/>
    </location>
</feature>
<gene>
    <name evidence="1" type="primary">ndhD</name>
</gene>
<geneLocation type="chloroplast"/>
<comment type="catalytic activity">
    <reaction evidence="1">
        <text>a plastoquinone + NADH + (n+1) H(+)(in) = a plastoquinol + NAD(+) + n H(+)(out)</text>
        <dbReference type="Rhea" id="RHEA:42608"/>
        <dbReference type="Rhea" id="RHEA-COMP:9561"/>
        <dbReference type="Rhea" id="RHEA-COMP:9562"/>
        <dbReference type="ChEBI" id="CHEBI:15378"/>
        <dbReference type="ChEBI" id="CHEBI:17757"/>
        <dbReference type="ChEBI" id="CHEBI:57540"/>
        <dbReference type="ChEBI" id="CHEBI:57945"/>
        <dbReference type="ChEBI" id="CHEBI:62192"/>
    </reaction>
</comment>
<comment type="catalytic activity">
    <reaction evidence="1">
        <text>a plastoquinone + NADPH + (n+1) H(+)(in) = a plastoquinol + NADP(+) + n H(+)(out)</text>
        <dbReference type="Rhea" id="RHEA:42612"/>
        <dbReference type="Rhea" id="RHEA-COMP:9561"/>
        <dbReference type="Rhea" id="RHEA-COMP:9562"/>
        <dbReference type="ChEBI" id="CHEBI:15378"/>
        <dbReference type="ChEBI" id="CHEBI:17757"/>
        <dbReference type="ChEBI" id="CHEBI:57783"/>
        <dbReference type="ChEBI" id="CHEBI:58349"/>
        <dbReference type="ChEBI" id="CHEBI:62192"/>
    </reaction>
</comment>
<comment type="subcellular location">
    <subcellularLocation>
        <location evidence="1">Plastid</location>
        <location evidence="1">Chloroplast thylakoid membrane</location>
        <topology evidence="1">Multi-pass membrane protein</topology>
    </subcellularLocation>
</comment>
<comment type="similarity">
    <text evidence="1">Belongs to the complex I subunit 4 family.</text>
</comment>
<dbReference type="EC" id="7.1.1.-" evidence="1"/>
<dbReference type="EMBL" id="AB240139">
    <property type="protein sequence ID" value="BAE48063.1"/>
    <property type="molecule type" value="Genomic_DNA"/>
</dbReference>
<dbReference type="RefSeq" id="YP_398923.1">
    <property type="nucleotide sequence ID" value="NC_007602.1"/>
</dbReference>
<dbReference type="SMR" id="Q33BX2"/>
<dbReference type="GeneID" id="3776350"/>
<dbReference type="KEGG" id="nto:3776350"/>
<dbReference type="OrthoDB" id="564260at2759"/>
<dbReference type="GO" id="GO:0009535">
    <property type="term" value="C:chloroplast thylakoid membrane"/>
    <property type="evidence" value="ECO:0007669"/>
    <property type="project" value="UniProtKB-SubCell"/>
</dbReference>
<dbReference type="GO" id="GO:0008137">
    <property type="term" value="F:NADH dehydrogenase (ubiquinone) activity"/>
    <property type="evidence" value="ECO:0007669"/>
    <property type="project" value="InterPro"/>
</dbReference>
<dbReference type="GO" id="GO:0048039">
    <property type="term" value="F:ubiquinone binding"/>
    <property type="evidence" value="ECO:0007669"/>
    <property type="project" value="TreeGrafter"/>
</dbReference>
<dbReference type="GO" id="GO:0042773">
    <property type="term" value="P:ATP synthesis coupled electron transport"/>
    <property type="evidence" value="ECO:0007669"/>
    <property type="project" value="InterPro"/>
</dbReference>
<dbReference type="GO" id="GO:0015990">
    <property type="term" value="P:electron transport coupled proton transport"/>
    <property type="evidence" value="ECO:0007669"/>
    <property type="project" value="TreeGrafter"/>
</dbReference>
<dbReference type="HAMAP" id="MF_00491">
    <property type="entry name" value="NDH1_NuoM"/>
    <property type="match status" value="1"/>
</dbReference>
<dbReference type="InterPro" id="IPR022997">
    <property type="entry name" value="NADH_Q_OxRdtase_chain4"/>
</dbReference>
<dbReference type="InterPro" id="IPR010227">
    <property type="entry name" value="NADH_Q_OxRdtase_chainM/4"/>
</dbReference>
<dbReference type="InterPro" id="IPR003918">
    <property type="entry name" value="NADH_UbQ_OxRdtase"/>
</dbReference>
<dbReference type="InterPro" id="IPR001750">
    <property type="entry name" value="ND/Mrp_TM"/>
</dbReference>
<dbReference type="NCBIfam" id="TIGR01972">
    <property type="entry name" value="NDH_I_M"/>
    <property type="match status" value="1"/>
</dbReference>
<dbReference type="PANTHER" id="PTHR43507:SF21">
    <property type="entry name" value="NAD(P)H-QUINONE OXIDOREDUCTASE CHAIN 4, CHLOROPLASTIC"/>
    <property type="match status" value="1"/>
</dbReference>
<dbReference type="PANTHER" id="PTHR43507">
    <property type="entry name" value="NADH-UBIQUINONE OXIDOREDUCTASE CHAIN 4"/>
    <property type="match status" value="1"/>
</dbReference>
<dbReference type="Pfam" id="PF00361">
    <property type="entry name" value="Proton_antipo_M"/>
    <property type="match status" value="1"/>
</dbReference>
<dbReference type="PRINTS" id="PR01437">
    <property type="entry name" value="NUOXDRDTASE4"/>
</dbReference>
<reference key="1">
    <citation type="journal article" date="2006" name="Mol. Genet. Genomics">
        <title>The chloroplast genome of Nicotiana sylvestris and Nicotiana tomentosiformis: complete sequencing confirms that the Nicotiana sylvestris progenitor is the maternal genome donor of Nicotiana tabacum.</title>
        <authorList>
            <person name="Yukawa M."/>
            <person name="Tsudzuki T."/>
            <person name="Sugiura M."/>
        </authorList>
    </citation>
    <scope>NUCLEOTIDE SEQUENCE [LARGE SCALE GENOMIC DNA]</scope>
</reference>
<protein>
    <recommendedName>
        <fullName evidence="1">NAD(P)H-quinone oxidoreductase chain 4, chloroplastic</fullName>
        <ecNumber evidence="1">7.1.1.-</ecNumber>
    </recommendedName>
    <alternativeName>
        <fullName evidence="1">NAD(P)H dehydrogenase, chain 4</fullName>
    </alternativeName>
    <alternativeName>
        <fullName evidence="1">NADH-plastoquinone oxidoreductase chain 4</fullName>
    </alternativeName>
</protein>
<keyword id="KW-0150">Chloroplast</keyword>
<keyword id="KW-0472">Membrane</keyword>
<keyword id="KW-0520">NAD</keyword>
<keyword id="KW-0521">NADP</keyword>
<keyword id="KW-0934">Plastid</keyword>
<keyword id="KW-0618">Plastoquinone</keyword>
<keyword id="KW-0874">Quinone</keyword>
<keyword id="KW-0793">Thylakoid</keyword>
<keyword id="KW-1278">Translocase</keyword>
<keyword id="KW-0812">Transmembrane</keyword>
<keyword id="KW-1133">Transmembrane helix</keyword>
<evidence type="ECO:0000255" key="1">
    <source>
        <dbReference type="HAMAP-Rule" id="MF_00491"/>
    </source>
</evidence>
<organism>
    <name type="scientific">Nicotiana tomentosiformis</name>
    <name type="common">Tobacco</name>
    <dbReference type="NCBI Taxonomy" id="4098"/>
    <lineage>
        <taxon>Eukaryota</taxon>
        <taxon>Viridiplantae</taxon>
        <taxon>Streptophyta</taxon>
        <taxon>Embryophyta</taxon>
        <taxon>Tracheophyta</taxon>
        <taxon>Spermatophyta</taxon>
        <taxon>Magnoliopsida</taxon>
        <taxon>eudicotyledons</taxon>
        <taxon>Gunneridae</taxon>
        <taxon>Pentapetalae</taxon>
        <taxon>asterids</taxon>
        <taxon>lamiids</taxon>
        <taxon>Solanales</taxon>
        <taxon>Solanaceae</taxon>
        <taxon>Nicotianoideae</taxon>
        <taxon>Nicotianeae</taxon>
        <taxon>Nicotiana</taxon>
    </lineage>
</organism>
<accession>Q33BX2</accession>
<sequence>MNYFPWLTIIVVFPIFAGSLIFFLPHKGNRVIRWYTICICILELLLTTYAFCYHFQSDDPLIQLVEDYKWINFFDFHWRLGIDGLSIGPILLTGFITTLATLAAWPITRDSRLFHFLMLAMYSGQIGSFSSRDLLLFFIMWELELIPVYLLLCMWGGKKRLYSATKFILYTAGGSVFLLMGVLGVALYGSNEPTLNFETSVNQSYPVVLEIIFYIGFFIAFAVKSPIIPLHTWLPDTHGEAHYSTCMLLAGILLKMGAYGLIRINMELLPHAHSIFSPWLMIIGTIQIIYAASTSLGQRNLKKRIAYSSVSHMGFIIIGISSLTDTGLNGALLQIISHGFIGAALFFLAGTTYDRIRLVYLDEMGGIASPMPKMFTMFSSFSMASLALPGMSGFVAELIVFFGIITGQKYLLIPKILITFVMAIGMILTPIYSLSMSRQMFYGYKLFNAPKDSFFDSGPRELFLSISIFLPVIGIGIYPDFVLSLAVDKVEVILSNFFYR</sequence>
<proteinExistence type="inferred from homology"/>